<organism>
    <name type="scientific">Wolbachia pipientis subsp. Culex pipiens (strain wPip)</name>
    <dbReference type="NCBI Taxonomy" id="570417"/>
    <lineage>
        <taxon>Bacteria</taxon>
        <taxon>Pseudomonadati</taxon>
        <taxon>Pseudomonadota</taxon>
        <taxon>Alphaproteobacteria</taxon>
        <taxon>Rickettsiales</taxon>
        <taxon>Anaplasmataceae</taxon>
        <taxon>Wolbachieae</taxon>
        <taxon>Wolbachia</taxon>
    </lineage>
</organism>
<gene>
    <name evidence="1" type="primary">engB</name>
    <name type="ordered locus">WP0042</name>
</gene>
<keyword id="KW-0131">Cell cycle</keyword>
<keyword id="KW-0132">Cell division</keyword>
<keyword id="KW-0342">GTP-binding</keyword>
<keyword id="KW-0460">Magnesium</keyword>
<keyword id="KW-0479">Metal-binding</keyword>
<keyword id="KW-0547">Nucleotide-binding</keyword>
<keyword id="KW-0717">Septation</keyword>
<reference key="1">
    <citation type="journal article" date="2008" name="Mol. Biol. Evol.">
        <title>Genome evolution of Wolbachia strain wPip from the Culex pipiens group.</title>
        <authorList>
            <person name="Klasson L."/>
            <person name="Walker T."/>
            <person name="Sebaihia M."/>
            <person name="Sanders M.J."/>
            <person name="Quail M.A."/>
            <person name="Lord A."/>
            <person name="Sanders S."/>
            <person name="Earl J."/>
            <person name="O'Neill S.L."/>
            <person name="Thomson N."/>
            <person name="Sinkins S.P."/>
            <person name="Parkhill J."/>
        </authorList>
    </citation>
    <scope>NUCLEOTIDE SEQUENCE [LARGE SCALE GENOMIC DNA]</scope>
    <source>
        <strain>wPip</strain>
    </source>
</reference>
<dbReference type="EMBL" id="AM999887">
    <property type="protein sequence ID" value="CAQ54151.1"/>
    <property type="molecule type" value="Genomic_DNA"/>
</dbReference>
<dbReference type="SMR" id="B3CL86"/>
<dbReference type="KEGG" id="wpi:WP0042"/>
<dbReference type="eggNOG" id="COG0218">
    <property type="taxonomic scope" value="Bacteria"/>
</dbReference>
<dbReference type="HOGENOM" id="CLU_033732_2_0_5"/>
<dbReference type="Proteomes" id="UP000008814">
    <property type="component" value="Chromosome"/>
</dbReference>
<dbReference type="GO" id="GO:0005525">
    <property type="term" value="F:GTP binding"/>
    <property type="evidence" value="ECO:0007669"/>
    <property type="project" value="UniProtKB-UniRule"/>
</dbReference>
<dbReference type="GO" id="GO:0046872">
    <property type="term" value="F:metal ion binding"/>
    <property type="evidence" value="ECO:0007669"/>
    <property type="project" value="UniProtKB-KW"/>
</dbReference>
<dbReference type="GO" id="GO:0000917">
    <property type="term" value="P:division septum assembly"/>
    <property type="evidence" value="ECO:0007669"/>
    <property type="project" value="UniProtKB-KW"/>
</dbReference>
<dbReference type="CDD" id="cd01876">
    <property type="entry name" value="YihA_EngB"/>
    <property type="match status" value="1"/>
</dbReference>
<dbReference type="Gene3D" id="3.40.50.300">
    <property type="entry name" value="P-loop containing nucleotide triphosphate hydrolases"/>
    <property type="match status" value="1"/>
</dbReference>
<dbReference type="HAMAP" id="MF_00321">
    <property type="entry name" value="GTPase_EngB"/>
    <property type="match status" value="1"/>
</dbReference>
<dbReference type="InterPro" id="IPR030393">
    <property type="entry name" value="G_ENGB_dom"/>
</dbReference>
<dbReference type="InterPro" id="IPR006073">
    <property type="entry name" value="GTP-bd"/>
</dbReference>
<dbReference type="InterPro" id="IPR019987">
    <property type="entry name" value="GTP-bd_ribosome_bio_YsxC"/>
</dbReference>
<dbReference type="InterPro" id="IPR027417">
    <property type="entry name" value="P-loop_NTPase"/>
</dbReference>
<dbReference type="NCBIfam" id="TIGR03598">
    <property type="entry name" value="GTPase_YsxC"/>
    <property type="match status" value="1"/>
</dbReference>
<dbReference type="PANTHER" id="PTHR11649:SF13">
    <property type="entry name" value="ENGB-TYPE G DOMAIN-CONTAINING PROTEIN"/>
    <property type="match status" value="1"/>
</dbReference>
<dbReference type="PANTHER" id="PTHR11649">
    <property type="entry name" value="MSS1/TRME-RELATED GTP-BINDING PROTEIN"/>
    <property type="match status" value="1"/>
</dbReference>
<dbReference type="Pfam" id="PF01926">
    <property type="entry name" value="MMR_HSR1"/>
    <property type="match status" value="1"/>
</dbReference>
<dbReference type="SUPFAM" id="SSF52540">
    <property type="entry name" value="P-loop containing nucleoside triphosphate hydrolases"/>
    <property type="match status" value="1"/>
</dbReference>
<dbReference type="PROSITE" id="PS51706">
    <property type="entry name" value="G_ENGB"/>
    <property type="match status" value="1"/>
</dbReference>
<protein>
    <recommendedName>
        <fullName evidence="1">Probable GTP-binding protein EngB</fullName>
    </recommendedName>
</protein>
<comment type="function">
    <text evidence="1">Necessary for normal cell division and for the maintenance of normal septation.</text>
</comment>
<comment type="cofactor">
    <cofactor evidence="1">
        <name>Mg(2+)</name>
        <dbReference type="ChEBI" id="CHEBI:18420"/>
    </cofactor>
</comment>
<comment type="similarity">
    <text evidence="1">Belongs to the TRAFAC class TrmE-Era-EngA-EngB-Septin-like GTPase superfamily. EngB GTPase family.</text>
</comment>
<sequence>MAKQITSICSFIFGASDKKSLPDESAPEIAFAGRSNVGKSSLINLLINSKKAARVSSKPGCTRQINFYSMYNDKFRIVDLPGYGYSCASKEEAVQYLNLIEYYLIHRRNLKRVFVLIDSKVGLKEIDKDFVYWLICNNINFNIVLTKIDKVNQESLNAILENTQKWVNNEHVSIHQISIRVKHKITKVRDEFFKFTR</sequence>
<proteinExistence type="inferred from homology"/>
<feature type="chain" id="PRO_1000116015" description="Probable GTP-binding protein EngB">
    <location>
        <begin position="1"/>
        <end position="197"/>
    </location>
</feature>
<feature type="domain" description="EngB-type G" evidence="1">
    <location>
        <begin position="25"/>
        <end position="197"/>
    </location>
</feature>
<feature type="binding site" evidence="1">
    <location>
        <begin position="33"/>
        <end position="40"/>
    </location>
    <ligand>
        <name>GTP</name>
        <dbReference type="ChEBI" id="CHEBI:37565"/>
    </ligand>
</feature>
<feature type="binding site" evidence="1">
    <location>
        <position position="40"/>
    </location>
    <ligand>
        <name>Mg(2+)</name>
        <dbReference type="ChEBI" id="CHEBI:18420"/>
    </ligand>
</feature>
<feature type="binding site" evidence="1">
    <location>
        <begin position="60"/>
        <end position="64"/>
    </location>
    <ligand>
        <name>GTP</name>
        <dbReference type="ChEBI" id="CHEBI:37565"/>
    </ligand>
</feature>
<feature type="binding site" evidence="1">
    <location>
        <position position="62"/>
    </location>
    <ligand>
        <name>Mg(2+)</name>
        <dbReference type="ChEBI" id="CHEBI:18420"/>
    </ligand>
</feature>
<feature type="binding site" evidence="1">
    <location>
        <begin position="79"/>
        <end position="82"/>
    </location>
    <ligand>
        <name>GTP</name>
        <dbReference type="ChEBI" id="CHEBI:37565"/>
    </ligand>
</feature>
<feature type="binding site" evidence="1">
    <location>
        <begin position="146"/>
        <end position="149"/>
    </location>
    <ligand>
        <name>GTP</name>
        <dbReference type="ChEBI" id="CHEBI:37565"/>
    </ligand>
</feature>
<feature type="binding site" evidence="1">
    <location>
        <begin position="177"/>
        <end position="179"/>
    </location>
    <ligand>
        <name>GTP</name>
        <dbReference type="ChEBI" id="CHEBI:37565"/>
    </ligand>
</feature>
<evidence type="ECO:0000255" key="1">
    <source>
        <dbReference type="HAMAP-Rule" id="MF_00321"/>
    </source>
</evidence>
<name>ENGB_WOLPP</name>
<accession>B3CL86</accession>